<organism>
    <name type="scientific">Pseudomonas aeruginosa (strain ATCC 15692 / DSM 22644 / CIP 104116 / JCM 14847 / LMG 12228 / 1C / PRS 101 / PAO1)</name>
    <dbReference type="NCBI Taxonomy" id="208964"/>
    <lineage>
        <taxon>Bacteria</taxon>
        <taxon>Pseudomonadati</taxon>
        <taxon>Pseudomonadota</taxon>
        <taxon>Gammaproteobacteria</taxon>
        <taxon>Pseudomonadales</taxon>
        <taxon>Pseudomonadaceae</taxon>
        <taxon>Pseudomonas</taxon>
    </lineage>
</organism>
<name>EXSE_PSEAE</name>
<dbReference type="EMBL" id="AE004091">
    <property type="protein sequence ID" value="AAG05100.1"/>
    <property type="molecule type" value="Genomic_DNA"/>
</dbReference>
<dbReference type="PIR" id="D83433">
    <property type="entry name" value="D83433"/>
</dbReference>
<dbReference type="RefSeq" id="NP_250402.1">
    <property type="nucleotide sequence ID" value="NC_002516.2"/>
</dbReference>
<dbReference type="RefSeq" id="WP_003100766.1">
    <property type="nucleotide sequence ID" value="NZ_QZGE01000003.1"/>
</dbReference>
<dbReference type="PDB" id="3KXY">
    <property type="method" value="X-ray"/>
    <property type="resolution" value="2.80 A"/>
    <property type="chains" value="T/U/V/W/X/Y=16-81"/>
</dbReference>
<dbReference type="PDBsum" id="3KXY"/>
<dbReference type="SMR" id="Q9I322"/>
<dbReference type="STRING" id="208964.PA1711"/>
<dbReference type="PaxDb" id="208964-PA1711"/>
<dbReference type="DNASU" id="880941"/>
<dbReference type="GeneID" id="880941"/>
<dbReference type="KEGG" id="pae:PA1711"/>
<dbReference type="PATRIC" id="fig|208964.12.peg.1773"/>
<dbReference type="PseudoCAP" id="PA1711"/>
<dbReference type="HOGENOM" id="CLU_195301_0_0_6"/>
<dbReference type="InParanoid" id="Q9I322"/>
<dbReference type="OrthoDB" id="6983534at2"/>
<dbReference type="BioCyc" id="PAER208964:G1FZ6-1742-MONOMER"/>
<dbReference type="PHI-base" id="PHI:3520"/>
<dbReference type="PHI-base" id="PHI:6401"/>
<dbReference type="Proteomes" id="UP000002438">
    <property type="component" value="Chromosome"/>
</dbReference>
<dbReference type="GO" id="GO:0005737">
    <property type="term" value="C:cytoplasm"/>
    <property type="evidence" value="ECO:0007669"/>
    <property type="project" value="UniProtKB-SubCell"/>
</dbReference>
<dbReference type="GO" id="GO:0005576">
    <property type="term" value="C:extracellular region"/>
    <property type="evidence" value="ECO:0007669"/>
    <property type="project" value="UniProtKB-SubCell"/>
</dbReference>
<dbReference type="GO" id="GO:0051087">
    <property type="term" value="F:protein-folding chaperone binding"/>
    <property type="evidence" value="ECO:0000314"/>
    <property type="project" value="PseudoCAP"/>
</dbReference>
<dbReference type="GO" id="GO:0071277">
    <property type="term" value="P:cellular response to calcium ion"/>
    <property type="evidence" value="ECO:0000314"/>
    <property type="project" value="PseudoCAP"/>
</dbReference>
<dbReference type="GO" id="GO:0050709">
    <property type="term" value="P:negative regulation of protein secretion"/>
    <property type="evidence" value="ECO:0000315"/>
    <property type="project" value="PseudoCAP"/>
</dbReference>
<dbReference type="GO" id="GO:0030254">
    <property type="term" value="P:protein secretion by the type III secretion system"/>
    <property type="evidence" value="ECO:0000315"/>
    <property type="project" value="PseudoCAP"/>
</dbReference>
<dbReference type="DisProt" id="DP01147"/>
<dbReference type="Gene3D" id="6.20.290.10">
    <property type="match status" value="1"/>
</dbReference>
<dbReference type="InterPro" id="IPR040866">
    <property type="entry name" value="T3SS_ExsE"/>
</dbReference>
<dbReference type="InterPro" id="IPR053763">
    <property type="entry name" value="T3SS_Regulatory_Protein"/>
</dbReference>
<dbReference type="NCBIfam" id="NF033906">
    <property type="entry name" value="ExsE_fam"/>
    <property type="match status" value="1"/>
</dbReference>
<dbReference type="Pfam" id="PF18286">
    <property type="entry name" value="T3SS_ExsE"/>
    <property type="match status" value="1"/>
</dbReference>
<protein>
    <recommendedName>
        <fullName evidence="5">Type III secretion regulatory protein ExsE</fullName>
    </recommendedName>
</protein>
<gene>
    <name type="primary">exsE</name>
    <name type="ordered locus">PA1711</name>
</gene>
<comment type="function">
    <text evidence="2 3">Acts as a negative regulator of the type III secretion regulon (T3SS) expression (PubMed:15911752). In the absence of inducing signals such as low Ca(2+) or host cell contact, the T3SS/injectisome is expressed at a low basal level and exists in a quiescent state due to ExsA sequestration by ExsD. ExsE binding to ExsC disrupts the complex between ExsC and ExsD, thereby allowing free ExsD to bind ExsA (PubMed:15911752, PubMed:15985546). Upon inducing signal, ExsE is secreted allowing ExsC to bind ExsD. In turn, ExsD cannot bind ExsA and prevent ExsA-mediated transcriptional activation of the type III secretion system (PubMed:15911752, PubMed:15985546).</text>
</comment>
<comment type="subunit">
    <text evidence="2 3 4">Interacts with ExsC.</text>
</comment>
<comment type="subcellular location">
    <subcellularLocation>
        <location evidence="2">Cytoplasm</location>
    </subcellularLocation>
    <subcellularLocation>
        <location evidence="2">Secreted</location>
    </subcellularLocation>
    <text evidence="2">Secreted under low-calcium conditions.</text>
</comment>
<comment type="disruption phenotype">
    <text evidence="2 3">Deletion mutant deregulates expression of the type III secretion genes.</text>
</comment>
<feature type="chain" id="PRO_0000449831" description="Type III secretion regulatory protein ExsE">
    <location>
        <begin position="1"/>
        <end position="81"/>
    </location>
</feature>
<feature type="region of interest" description="Disordered" evidence="1">
    <location>
        <begin position="55"/>
        <end position="81"/>
    </location>
</feature>
<feature type="strand" evidence="7">
    <location>
        <begin position="21"/>
        <end position="23"/>
    </location>
</feature>
<feature type="strand" evidence="7">
    <location>
        <begin position="26"/>
        <end position="31"/>
    </location>
</feature>
<feature type="helix" evidence="7">
    <location>
        <begin position="41"/>
        <end position="51"/>
    </location>
</feature>
<feature type="helix" evidence="7">
    <location>
        <begin position="58"/>
        <end position="67"/>
    </location>
</feature>
<feature type="helix" evidence="7">
    <location>
        <begin position="73"/>
        <end position="75"/>
    </location>
</feature>
<feature type="strand" evidence="7">
    <location>
        <begin position="78"/>
        <end position="80"/>
    </location>
</feature>
<proteinExistence type="evidence at protein level"/>
<accession>Q9I322</accession>
<evidence type="ECO:0000256" key="1">
    <source>
        <dbReference type="SAM" id="MobiDB-lite"/>
    </source>
</evidence>
<evidence type="ECO:0000269" key="2">
    <source>
    </source>
</evidence>
<evidence type="ECO:0000269" key="3">
    <source>
    </source>
</evidence>
<evidence type="ECO:0000269" key="4">
    <source>
    </source>
</evidence>
<evidence type="ECO:0000303" key="5">
    <source>
    </source>
</evidence>
<evidence type="ECO:0007744" key="6">
    <source>
        <dbReference type="PDB" id="3KXY"/>
    </source>
</evidence>
<evidence type="ECO:0007829" key="7">
    <source>
        <dbReference type="PDB" id="3KXY"/>
    </source>
</evidence>
<keyword id="KW-0002">3D-structure</keyword>
<keyword id="KW-0963">Cytoplasm</keyword>
<keyword id="KW-1185">Reference proteome</keyword>
<keyword id="KW-0964">Secreted</keyword>
<sequence>MKIESISPVQPSQDAGAEAVGHFEGRSVTRAAVRGEDRSSVAGLARWLARNVAGDPRSEQALQRLADGDGTPLEARTVRRR</sequence>
<reference key="1">
    <citation type="journal article" date="2000" name="Nature">
        <title>Complete genome sequence of Pseudomonas aeruginosa PAO1, an opportunistic pathogen.</title>
        <authorList>
            <person name="Stover C.K."/>
            <person name="Pham X.-Q.T."/>
            <person name="Erwin A.L."/>
            <person name="Mizoguchi S.D."/>
            <person name="Warrener P."/>
            <person name="Hickey M.J."/>
            <person name="Brinkman F.S.L."/>
            <person name="Hufnagle W.O."/>
            <person name="Kowalik D.J."/>
            <person name="Lagrou M."/>
            <person name="Garber R.L."/>
            <person name="Goltry L."/>
            <person name="Tolentino E."/>
            <person name="Westbrock-Wadman S."/>
            <person name="Yuan Y."/>
            <person name="Brody L.L."/>
            <person name="Coulter S.N."/>
            <person name="Folger K.R."/>
            <person name="Kas A."/>
            <person name="Larbig K."/>
            <person name="Lim R.M."/>
            <person name="Smith K.A."/>
            <person name="Spencer D.H."/>
            <person name="Wong G.K.-S."/>
            <person name="Wu Z."/>
            <person name="Paulsen I.T."/>
            <person name="Reizer J."/>
            <person name="Saier M.H. Jr."/>
            <person name="Hancock R.E.W."/>
            <person name="Lory S."/>
            <person name="Olson M.V."/>
        </authorList>
    </citation>
    <scope>NUCLEOTIDE SEQUENCE [LARGE SCALE GENOMIC DNA]</scope>
    <source>
        <strain>ATCC 15692 / DSM 22644 / CIP 104116 / JCM 14847 / LMG 12228 / 1C / PRS 101 / PAO1</strain>
    </source>
</reference>
<reference key="2">
    <citation type="journal article" date="2005" name="Proc. Natl. Acad. Sci. U.S.A.">
        <title>ExsE, a secreted regulator of type III secretion genes in Pseudomonas aeruginosa.</title>
        <authorList>
            <person name="Rietsch A."/>
            <person name="Vallet-Gely I."/>
            <person name="Dove S.L."/>
            <person name="Mekalanos J.J."/>
        </authorList>
    </citation>
    <scope>FUNCTION</scope>
    <scope>DISRUPTION PHENOTYPE</scope>
    <scope>SUBCELLULAR LOCATION</scope>
    <scope>INTERACTION WITH EXSC</scope>
</reference>
<reference key="3">
    <citation type="journal article" date="2005" name="Proc. Natl. Acad. Sci. U.S.A.">
        <title>A secreted regulatory protein couples transcription to the secretory activity of the Pseudomonas aeruginosa type III secretion system.</title>
        <authorList>
            <person name="Urbanowski M.L."/>
            <person name="Lykken G.L."/>
            <person name="Yahr T.L."/>
        </authorList>
    </citation>
    <scope>FUNCTION</scope>
    <scope>DISRUPTION PHENOTYPE</scope>
    <scope>INTERACTION WITH EXSC</scope>
</reference>
<reference evidence="6" key="4">
    <citation type="journal article" date="2010" name="Biochemistry">
        <title>Analysis of the crystal structure of the ExsC.ExsE complex reveals distinctive binding interactions of the Pseudomonas aeruginosa type III secretion chaperone ExsC with ExsE and ExsD.</title>
        <authorList>
            <person name="Vogelaar N.J."/>
            <person name="Jing X."/>
            <person name="Robinson H.H."/>
            <person name="Schubot F.D."/>
        </authorList>
    </citation>
    <scope>X-RAY CRYSTALLOGRAPHY (2.80 ANGSTROMS) OF 16-81</scope>
    <scope>INTERACTION WITH EXSC</scope>
</reference>